<organism>
    <name type="scientific">Limosilactobacillus fermentum (strain NBRC 3956 / LMG 18251)</name>
    <name type="common">Lactobacillus fermentum</name>
    <dbReference type="NCBI Taxonomy" id="334390"/>
    <lineage>
        <taxon>Bacteria</taxon>
        <taxon>Bacillati</taxon>
        <taxon>Bacillota</taxon>
        <taxon>Bacilli</taxon>
        <taxon>Lactobacillales</taxon>
        <taxon>Lactobacillaceae</taxon>
        <taxon>Limosilactobacillus</taxon>
    </lineage>
</organism>
<comment type="function">
    <text evidence="1">Located at the top of the head of the 30S subunit, it contacts several helices of the 16S rRNA. In the 70S ribosome it contacts the 23S rRNA (bridge B1a) and protein L5 of the 50S subunit (bridge B1b), connecting the 2 subunits; these bridges are implicated in subunit movement. Contacts the tRNAs in the A and P-sites.</text>
</comment>
<comment type="subunit">
    <text evidence="1">Part of the 30S ribosomal subunit. Forms a loose heterodimer with protein S19. Forms two bridges to the 50S subunit in the 70S ribosome.</text>
</comment>
<comment type="similarity">
    <text evidence="1">Belongs to the universal ribosomal protein uS13 family.</text>
</comment>
<name>RS13_LIMF3</name>
<feature type="chain" id="PRO_1000141277" description="Small ribosomal subunit protein uS13">
    <location>
        <begin position="1"/>
        <end position="121"/>
    </location>
</feature>
<feature type="region of interest" description="Disordered" evidence="2">
    <location>
        <begin position="90"/>
        <end position="121"/>
    </location>
</feature>
<sequence length="121" mass="13549">MARIAGVDLPRDKRIVIGLTYIFGIGNTTAQKILANAGVSEDIRVRDLTPDQEEKIRAEVDQIKVEGDLRREVSLNIKRLQEIGSYRGMRHRHGLPVRGQHTKNNARTRKGKAVAIAGKKK</sequence>
<keyword id="KW-1185">Reference proteome</keyword>
<keyword id="KW-0687">Ribonucleoprotein</keyword>
<keyword id="KW-0689">Ribosomal protein</keyword>
<keyword id="KW-0694">RNA-binding</keyword>
<keyword id="KW-0699">rRNA-binding</keyword>
<keyword id="KW-0820">tRNA-binding</keyword>
<reference key="1">
    <citation type="journal article" date="2008" name="DNA Res.">
        <title>Comparative genome analysis of Lactobacillus reuteri and Lactobacillus fermentum reveal a genomic island for reuterin and cobalamin production.</title>
        <authorList>
            <person name="Morita H."/>
            <person name="Toh H."/>
            <person name="Fukuda S."/>
            <person name="Horikawa H."/>
            <person name="Oshima K."/>
            <person name="Suzuki T."/>
            <person name="Murakami M."/>
            <person name="Hisamatsu S."/>
            <person name="Kato Y."/>
            <person name="Takizawa T."/>
            <person name="Fukuoka H."/>
            <person name="Yoshimura T."/>
            <person name="Itoh K."/>
            <person name="O'Sullivan D.J."/>
            <person name="McKay L.L."/>
            <person name="Ohno H."/>
            <person name="Kikuchi J."/>
            <person name="Masaoka T."/>
            <person name="Hattori M."/>
        </authorList>
    </citation>
    <scope>NUCLEOTIDE SEQUENCE [LARGE SCALE GENOMIC DNA]</scope>
    <source>
        <strain>NBRC 3956 / LMG 18251</strain>
    </source>
</reference>
<accession>B2GDU5</accession>
<proteinExistence type="inferred from homology"/>
<dbReference type="EMBL" id="AP008937">
    <property type="protein sequence ID" value="BAG27827.1"/>
    <property type="molecule type" value="Genomic_DNA"/>
</dbReference>
<dbReference type="RefSeq" id="WP_003681611.1">
    <property type="nucleotide sequence ID" value="NC_010610.1"/>
</dbReference>
<dbReference type="SMR" id="B2GDU5"/>
<dbReference type="GeneID" id="83716132"/>
<dbReference type="KEGG" id="lfe:LAF_1491"/>
<dbReference type="eggNOG" id="COG0099">
    <property type="taxonomic scope" value="Bacteria"/>
</dbReference>
<dbReference type="HOGENOM" id="CLU_103849_1_1_9"/>
<dbReference type="Proteomes" id="UP000001697">
    <property type="component" value="Chromosome"/>
</dbReference>
<dbReference type="GO" id="GO:0005829">
    <property type="term" value="C:cytosol"/>
    <property type="evidence" value="ECO:0007669"/>
    <property type="project" value="TreeGrafter"/>
</dbReference>
<dbReference type="GO" id="GO:0015935">
    <property type="term" value="C:small ribosomal subunit"/>
    <property type="evidence" value="ECO:0007669"/>
    <property type="project" value="TreeGrafter"/>
</dbReference>
<dbReference type="GO" id="GO:0019843">
    <property type="term" value="F:rRNA binding"/>
    <property type="evidence" value="ECO:0007669"/>
    <property type="project" value="UniProtKB-UniRule"/>
</dbReference>
<dbReference type="GO" id="GO:0003735">
    <property type="term" value="F:structural constituent of ribosome"/>
    <property type="evidence" value="ECO:0007669"/>
    <property type="project" value="InterPro"/>
</dbReference>
<dbReference type="GO" id="GO:0000049">
    <property type="term" value="F:tRNA binding"/>
    <property type="evidence" value="ECO:0007669"/>
    <property type="project" value="UniProtKB-UniRule"/>
</dbReference>
<dbReference type="GO" id="GO:0006412">
    <property type="term" value="P:translation"/>
    <property type="evidence" value="ECO:0007669"/>
    <property type="project" value="UniProtKB-UniRule"/>
</dbReference>
<dbReference type="FunFam" id="1.10.8.50:FF:000001">
    <property type="entry name" value="30S ribosomal protein S13"/>
    <property type="match status" value="1"/>
</dbReference>
<dbReference type="FunFam" id="4.10.910.10:FF:000001">
    <property type="entry name" value="30S ribosomal protein S13"/>
    <property type="match status" value="1"/>
</dbReference>
<dbReference type="Gene3D" id="1.10.8.50">
    <property type="match status" value="1"/>
</dbReference>
<dbReference type="Gene3D" id="4.10.910.10">
    <property type="entry name" value="30s ribosomal protein s13, domain 2"/>
    <property type="match status" value="1"/>
</dbReference>
<dbReference type="HAMAP" id="MF_01315">
    <property type="entry name" value="Ribosomal_uS13"/>
    <property type="match status" value="1"/>
</dbReference>
<dbReference type="InterPro" id="IPR027437">
    <property type="entry name" value="Rbsml_uS13_C"/>
</dbReference>
<dbReference type="InterPro" id="IPR001892">
    <property type="entry name" value="Ribosomal_uS13"/>
</dbReference>
<dbReference type="InterPro" id="IPR010979">
    <property type="entry name" value="Ribosomal_uS13-like_H2TH"/>
</dbReference>
<dbReference type="InterPro" id="IPR019980">
    <property type="entry name" value="Ribosomal_uS13_bac-type"/>
</dbReference>
<dbReference type="InterPro" id="IPR018269">
    <property type="entry name" value="Ribosomal_uS13_CS"/>
</dbReference>
<dbReference type="NCBIfam" id="TIGR03631">
    <property type="entry name" value="uS13_bact"/>
    <property type="match status" value="1"/>
</dbReference>
<dbReference type="PANTHER" id="PTHR10871">
    <property type="entry name" value="30S RIBOSOMAL PROTEIN S13/40S RIBOSOMAL PROTEIN S18"/>
    <property type="match status" value="1"/>
</dbReference>
<dbReference type="PANTHER" id="PTHR10871:SF1">
    <property type="entry name" value="SMALL RIBOSOMAL SUBUNIT PROTEIN US13M"/>
    <property type="match status" value="1"/>
</dbReference>
<dbReference type="Pfam" id="PF00416">
    <property type="entry name" value="Ribosomal_S13"/>
    <property type="match status" value="1"/>
</dbReference>
<dbReference type="PIRSF" id="PIRSF002134">
    <property type="entry name" value="Ribosomal_S13"/>
    <property type="match status" value="1"/>
</dbReference>
<dbReference type="SUPFAM" id="SSF46946">
    <property type="entry name" value="S13-like H2TH domain"/>
    <property type="match status" value="1"/>
</dbReference>
<dbReference type="PROSITE" id="PS00646">
    <property type="entry name" value="RIBOSOMAL_S13_1"/>
    <property type="match status" value="1"/>
</dbReference>
<dbReference type="PROSITE" id="PS50159">
    <property type="entry name" value="RIBOSOMAL_S13_2"/>
    <property type="match status" value="1"/>
</dbReference>
<protein>
    <recommendedName>
        <fullName evidence="1">Small ribosomal subunit protein uS13</fullName>
    </recommendedName>
    <alternativeName>
        <fullName evidence="3">30S ribosomal protein S13</fullName>
    </alternativeName>
</protein>
<gene>
    <name evidence="1" type="primary">rpsM</name>
    <name type="ordered locus">LAF_1491</name>
</gene>
<evidence type="ECO:0000255" key="1">
    <source>
        <dbReference type="HAMAP-Rule" id="MF_01315"/>
    </source>
</evidence>
<evidence type="ECO:0000256" key="2">
    <source>
        <dbReference type="SAM" id="MobiDB-lite"/>
    </source>
</evidence>
<evidence type="ECO:0000305" key="3"/>